<evidence type="ECO:0000255" key="1">
    <source>
        <dbReference type="HAMAP-Rule" id="MF_01077"/>
    </source>
</evidence>
<keyword id="KW-0963">Cytoplasm</keyword>
<keyword id="KW-0690">Ribosome biogenesis</keyword>
<protein>
    <recommendedName>
        <fullName evidence="1">Ribosome maturation factor RimP</fullName>
    </recommendedName>
</protein>
<sequence length="167" mass="18493">MSTTQSERLRGLLEPLVSAQQLDLEEIEVSRAGRRGVLRIIVDSEEGVELDACAELSRAISEKLDETDAMGEGEYVLEVSSPGADRPLTEHRHYVRATGRLARFHLAGDGSGELVARILAVDEEGLDLEVPGVKGRKPTARRLAFDEIARARVEIEFNRKDKKEEEA</sequence>
<feature type="chain" id="PRO_1000136795" description="Ribosome maturation factor RimP">
    <location>
        <begin position="1"/>
        <end position="167"/>
    </location>
</feature>
<dbReference type="EMBL" id="AP009493">
    <property type="protein sequence ID" value="BAG18643.1"/>
    <property type="molecule type" value="Genomic_DNA"/>
</dbReference>
<dbReference type="RefSeq" id="WP_003965885.1">
    <property type="nucleotide sequence ID" value="NC_010572.1"/>
</dbReference>
<dbReference type="SMR" id="B1VYN8"/>
<dbReference type="KEGG" id="sgr:SGR_1814"/>
<dbReference type="eggNOG" id="COG0779">
    <property type="taxonomic scope" value="Bacteria"/>
</dbReference>
<dbReference type="HOGENOM" id="CLU_070525_3_0_11"/>
<dbReference type="Proteomes" id="UP000001685">
    <property type="component" value="Chromosome"/>
</dbReference>
<dbReference type="GO" id="GO:0005829">
    <property type="term" value="C:cytosol"/>
    <property type="evidence" value="ECO:0007669"/>
    <property type="project" value="TreeGrafter"/>
</dbReference>
<dbReference type="GO" id="GO:0000028">
    <property type="term" value="P:ribosomal small subunit assembly"/>
    <property type="evidence" value="ECO:0007669"/>
    <property type="project" value="TreeGrafter"/>
</dbReference>
<dbReference type="GO" id="GO:0006412">
    <property type="term" value="P:translation"/>
    <property type="evidence" value="ECO:0007669"/>
    <property type="project" value="TreeGrafter"/>
</dbReference>
<dbReference type="CDD" id="cd01734">
    <property type="entry name" value="YlxS_C"/>
    <property type="match status" value="1"/>
</dbReference>
<dbReference type="FunFam" id="3.30.300.70:FF:000001">
    <property type="entry name" value="Ribosome maturation factor RimP"/>
    <property type="match status" value="1"/>
</dbReference>
<dbReference type="Gene3D" id="3.30.300.70">
    <property type="entry name" value="RimP-like superfamily, N-terminal"/>
    <property type="match status" value="1"/>
</dbReference>
<dbReference type="HAMAP" id="MF_01077">
    <property type="entry name" value="RimP"/>
    <property type="match status" value="1"/>
</dbReference>
<dbReference type="InterPro" id="IPR003728">
    <property type="entry name" value="Ribosome_maturation_RimP"/>
</dbReference>
<dbReference type="InterPro" id="IPR028998">
    <property type="entry name" value="RimP_C"/>
</dbReference>
<dbReference type="InterPro" id="IPR036847">
    <property type="entry name" value="RimP_C_sf"/>
</dbReference>
<dbReference type="InterPro" id="IPR028989">
    <property type="entry name" value="RimP_N"/>
</dbReference>
<dbReference type="InterPro" id="IPR035956">
    <property type="entry name" value="RimP_N_sf"/>
</dbReference>
<dbReference type="NCBIfam" id="NF000930">
    <property type="entry name" value="PRK00092.2-2"/>
    <property type="match status" value="1"/>
</dbReference>
<dbReference type="PANTHER" id="PTHR33867">
    <property type="entry name" value="RIBOSOME MATURATION FACTOR RIMP"/>
    <property type="match status" value="1"/>
</dbReference>
<dbReference type="PANTHER" id="PTHR33867:SF1">
    <property type="entry name" value="RIBOSOME MATURATION FACTOR RIMP"/>
    <property type="match status" value="1"/>
</dbReference>
<dbReference type="Pfam" id="PF17384">
    <property type="entry name" value="DUF150_C"/>
    <property type="match status" value="1"/>
</dbReference>
<dbReference type="Pfam" id="PF02576">
    <property type="entry name" value="RimP_N"/>
    <property type="match status" value="1"/>
</dbReference>
<dbReference type="SUPFAM" id="SSF74942">
    <property type="entry name" value="YhbC-like, C-terminal domain"/>
    <property type="match status" value="1"/>
</dbReference>
<dbReference type="SUPFAM" id="SSF75420">
    <property type="entry name" value="YhbC-like, N-terminal domain"/>
    <property type="match status" value="1"/>
</dbReference>
<name>RIMP_STRGG</name>
<accession>B1VYN8</accession>
<gene>
    <name evidence="1" type="primary">rimP</name>
    <name type="ordered locus">SGR_1814</name>
</gene>
<organism>
    <name type="scientific">Streptomyces griseus subsp. griseus (strain JCM 4626 / CBS 651.72 / NBRC 13350 / KCC S-0626 / ISP 5235)</name>
    <dbReference type="NCBI Taxonomy" id="455632"/>
    <lineage>
        <taxon>Bacteria</taxon>
        <taxon>Bacillati</taxon>
        <taxon>Actinomycetota</taxon>
        <taxon>Actinomycetes</taxon>
        <taxon>Kitasatosporales</taxon>
        <taxon>Streptomycetaceae</taxon>
        <taxon>Streptomyces</taxon>
    </lineage>
</organism>
<proteinExistence type="inferred from homology"/>
<reference key="1">
    <citation type="journal article" date="2008" name="J. Bacteriol.">
        <title>Genome sequence of the streptomycin-producing microorganism Streptomyces griseus IFO 13350.</title>
        <authorList>
            <person name="Ohnishi Y."/>
            <person name="Ishikawa J."/>
            <person name="Hara H."/>
            <person name="Suzuki H."/>
            <person name="Ikenoya M."/>
            <person name="Ikeda H."/>
            <person name="Yamashita A."/>
            <person name="Hattori M."/>
            <person name="Horinouchi S."/>
        </authorList>
    </citation>
    <scope>NUCLEOTIDE SEQUENCE [LARGE SCALE GENOMIC DNA]</scope>
    <source>
        <strain>JCM 4626 / CBS 651.72 / NBRC 13350 / KCC S-0626 / ISP 5235</strain>
    </source>
</reference>
<comment type="function">
    <text evidence="1">Required for maturation of 30S ribosomal subunits.</text>
</comment>
<comment type="subcellular location">
    <subcellularLocation>
        <location evidence="1">Cytoplasm</location>
    </subcellularLocation>
</comment>
<comment type="similarity">
    <text evidence="1">Belongs to the RimP family.</text>
</comment>